<reference key="1">
    <citation type="journal article" date="1995" name="Biochim. Biophys. Acta">
        <title>Cloning and expression of human cDNA encoding phosphatidylinositol transfer protein beta.</title>
        <authorList>
            <person name="Tanaka S."/>
            <person name="Yamashita S."/>
            <person name="Hosaka K."/>
        </authorList>
    </citation>
    <scope>NUCLEOTIDE SEQUENCE [MRNA] (ISOFORM 1)</scope>
    <source>
        <tissue>Brain</tissue>
    </source>
</reference>
<reference key="2">
    <citation type="journal article" date="2004" name="Genome Biol.">
        <title>A genome annotation-driven approach to cloning the human ORFeome.</title>
        <authorList>
            <person name="Collins J.E."/>
            <person name="Wright C.L."/>
            <person name="Edwards C.A."/>
            <person name="Davis M.P."/>
            <person name="Grinham J.A."/>
            <person name="Cole C.G."/>
            <person name="Goward M.E."/>
            <person name="Aguado B."/>
            <person name="Mallya M."/>
            <person name="Mokrab Y."/>
            <person name="Huckle E.J."/>
            <person name="Beare D.M."/>
            <person name="Dunham I."/>
        </authorList>
    </citation>
    <scope>NUCLEOTIDE SEQUENCE [LARGE SCALE MRNA] (ISOFORM 1)</scope>
</reference>
<reference key="3">
    <citation type="journal article" date="2004" name="Nat. Genet.">
        <title>Complete sequencing and characterization of 21,243 full-length human cDNAs.</title>
        <authorList>
            <person name="Ota T."/>
            <person name="Suzuki Y."/>
            <person name="Nishikawa T."/>
            <person name="Otsuki T."/>
            <person name="Sugiyama T."/>
            <person name="Irie R."/>
            <person name="Wakamatsu A."/>
            <person name="Hayashi K."/>
            <person name="Sato H."/>
            <person name="Nagai K."/>
            <person name="Kimura K."/>
            <person name="Makita H."/>
            <person name="Sekine M."/>
            <person name="Obayashi M."/>
            <person name="Nishi T."/>
            <person name="Shibahara T."/>
            <person name="Tanaka T."/>
            <person name="Ishii S."/>
            <person name="Yamamoto J."/>
            <person name="Saito K."/>
            <person name="Kawai Y."/>
            <person name="Isono Y."/>
            <person name="Nakamura Y."/>
            <person name="Nagahari K."/>
            <person name="Murakami K."/>
            <person name="Yasuda T."/>
            <person name="Iwayanagi T."/>
            <person name="Wagatsuma M."/>
            <person name="Shiratori A."/>
            <person name="Sudo H."/>
            <person name="Hosoiri T."/>
            <person name="Kaku Y."/>
            <person name="Kodaira H."/>
            <person name="Kondo H."/>
            <person name="Sugawara M."/>
            <person name="Takahashi M."/>
            <person name="Kanda K."/>
            <person name="Yokoi T."/>
            <person name="Furuya T."/>
            <person name="Kikkawa E."/>
            <person name="Omura Y."/>
            <person name="Abe K."/>
            <person name="Kamihara K."/>
            <person name="Katsuta N."/>
            <person name="Sato K."/>
            <person name="Tanikawa M."/>
            <person name="Yamazaki M."/>
            <person name="Ninomiya K."/>
            <person name="Ishibashi T."/>
            <person name="Yamashita H."/>
            <person name="Murakawa K."/>
            <person name="Fujimori K."/>
            <person name="Tanai H."/>
            <person name="Kimata M."/>
            <person name="Watanabe M."/>
            <person name="Hiraoka S."/>
            <person name="Chiba Y."/>
            <person name="Ishida S."/>
            <person name="Ono Y."/>
            <person name="Takiguchi S."/>
            <person name="Watanabe S."/>
            <person name="Yosida M."/>
            <person name="Hotuta T."/>
            <person name="Kusano J."/>
            <person name="Kanehori K."/>
            <person name="Takahashi-Fujii A."/>
            <person name="Hara H."/>
            <person name="Tanase T.-O."/>
            <person name="Nomura Y."/>
            <person name="Togiya S."/>
            <person name="Komai F."/>
            <person name="Hara R."/>
            <person name="Takeuchi K."/>
            <person name="Arita M."/>
            <person name="Imose N."/>
            <person name="Musashino K."/>
            <person name="Yuuki H."/>
            <person name="Oshima A."/>
            <person name="Sasaki N."/>
            <person name="Aotsuka S."/>
            <person name="Yoshikawa Y."/>
            <person name="Matsunawa H."/>
            <person name="Ichihara T."/>
            <person name="Shiohata N."/>
            <person name="Sano S."/>
            <person name="Moriya S."/>
            <person name="Momiyama H."/>
            <person name="Satoh N."/>
            <person name="Takami S."/>
            <person name="Terashima Y."/>
            <person name="Suzuki O."/>
            <person name="Nakagawa S."/>
            <person name="Senoh A."/>
            <person name="Mizoguchi H."/>
            <person name="Goto Y."/>
            <person name="Shimizu F."/>
            <person name="Wakebe H."/>
            <person name="Hishigaki H."/>
            <person name="Watanabe T."/>
            <person name="Sugiyama A."/>
            <person name="Takemoto M."/>
            <person name="Kawakami B."/>
            <person name="Yamazaki M."/>
            <person name="Watanabe K."/>
            <person name="Kumagai A."/>
            <person name="Itakura S."/>
            <person name="Fukuzumi Y."/>
            <person name="Fujimori Y."/>
            <person name="Komiyama M."/>
            <person name="Tashiro H."/>
            <person name="Tanigami A."/>
            <person name="Fujiwara T."/>
            <person name="Ono T."/>
            <person name="Yamada K."/>
            <person name="Fujii Y."/>
            <person name="Ozaki K."/>
            <person name="Hirao M."/>
            <person name="Ohmori Y."/>
            <person name="Kawabata A."/>
            <person name="Hikiji T."/>
            <person name="Kobatake N."/>
            <person name="Inagaki H."/>
            <person name="Ikema Y."/>
            <person name="Okamoto S."/>
            <person name="Okitani R."/>
            <person name="Kawakami T."/>
            <person name="Noguchi S."/>
            <person name="Itoh T."/>
            <person name="Shigeta K."/>
            <person name="Senba T."/>
            <person name="Matsumura K."/>
            <person name="Nakajima Y."/>
            <person name="Mizuno T."/>
            <person name="Morinaga M."/>
            <person name="Sasaki M."/>
            <person name="Togashi T."/>
            <person name="Oyama M."/>
            <person name="Hata H."/>
            <person name="Watanabe M."/>
            <person name="Komatsu T."/>
            <person name="Mizushima-Sugano J."/>
            <person name="Satoh T."/>
            <person name="Shirai Y."/>
            <person name="Takahashi Y."/>
            <person name="Nakagawa K."/>
            <person name="Okumura K."/>
            <person name="Nagase T."/>
            <person name="Nomura N."/>
            <person name="Kikuchi H."/>
            <person name="Masuho Y."/>
            <person name="Yamashita R."/>
            <person name="Nakai K."/>
            <person name="Yada T."/>
            <person name="Nakamura Y."/>
            <person name="Ohara O."/>
            <person name="Isogai T."/>
            <person name="Sugano S."/>
        </authorList>
    </citation>
    <scope>NUCLEOTIDE SEQUENCE [LARGE SCALE MRNA] (ISOFORM 3)</scope>
    <source>
        <tissue>Testis</tissue>
    </source>
</reference>
<reference key="4">
    <citation type="journal article" date="1999" name="Nature">
        <title>The DNA sequence of human chromosome 22.</title>
        <authorList>
            <person name="Dunham I."/>
            <person name="Hunt A.R."/>
            <person name="Collins J.E."/>
            <person name="Bruskiewich R."/>
            <person name="Beare D.M."/>
            <person name="Clamp M."/>
            <person name="Smink L.J."/>
            <person name="Ainscough R."/>
            <person name="Almeida J.P."/>
            <person name="Babbage A.K."/>
            <person name="Bagguley C."/>
            <person name="Bailey J."/>
            <person name="Barlow K.F."/>
            <person name="Bates K.N."/>
            <person name="Beasley O.P."/>
            <person name="Bird C.P."/>
            <person name="Blakey S.E."/>
            <person name="Bridgeman A.M."/>
            <person name="Buck D."/>
            <person name="Burgess J."/>
            <person name="Burrill W.D."/>
            <person name="Burton J."/>
            <person name="Carder C."/>
            <person name="Carter N.P."/>
            <person name="Chen Y."/>
            <person name="Clark G."/>
            <person name="Clegg S.M."/>
            <person name="Cobley V.E."/>
            <person name="Cole C.G."/>
            <person name="Collier R.E."/>
            <person name="Connor R."/>
            <person name="Conroy D."/>
            <person name="Corby N.R."/>
            <person name="Coville G.J."/>
            <person name="Cox A.V."/>
            <person name="Davis J."/>
            <person name="Dawson E."/>
            <person name="Dhami P.D."/>
            <person name="Dockree C."/>
            <person name="Dodsworth S.J."/>
            <person name="Durbin R.M."/>
            <person name="Ellington A.G."/>
            <person name="Evans K.L."/>
            <person name="Fey J.M."/>
            <person name="Fleming K."/>
            <person name="French L."/>
            <person name="Garner A.A."/>
            <person name="Gilbert J.G.R."/>
            <person name="Goward M.E."/>
            <person name="Grafham D.V."/>
            <person name="Griffiths M.N.D."/>
            <person name="Hall C."/>
            <person name="Hall R.E."/>
            <person name="Hall-Tamlyn G."/>
            <person name="Heathcott R.W."/>
            <person name="Ho S."/>
            <person name="Holmes S."/>
            <person name="Hunt S.E."/>
            <person name="Jones M.C."/>
            <person name="Kershaw J."/>
            <person name="Kimberley A.M."/>
            <person name="King A."/>
            <person name="Laird G.K."/>
            <person name="Langford C.F."/>
            <person name="Leversha M.A."/>
            <person name="Lloyd C."/>
            <person name="Lloyd D.M."/>
            <person name="Martyn I.D."/>
            <person name="Mashreghi-Mohammadi M."/>
            <person name="Matthews L.H."/>
            <person name="Mccann O.T."/>
            <person name="Mcclay J."/>
            <person name="Mclaren S."/>
            <person name="McMurray A.A."/>
            <person name="Milne S.A."/>
            <person name="Mortimore B.J."/>
            <person name="Odell C.N."/>
            <person name="Pavitt R."/>
            <person name="Pearce A.V."/>
            <person name="Pearson D."/>
            <person name="Phillimore B.J.C.T."/>
            <person name="Phillips S.H."/>
            <person name="Plumb R.W."/>
            <person name="Ramsay H."/>
            <person name="Ramsey Y."/>
            <person name="Rogers L."/>
            <person name="Ross M.T."/>
            <person name="Scott C.E."/>
            <person name="Sehra H.K."/>
            <person name="Skuce C.D."/>
            <person name="Smalley S."/>
            <person name="Smith M.L."/>
            <person name="Soderlund C."/>
            <person name="Spragon L."/>
            <person name="Steward C.A."/>
            <person name="Sulston J.E."/>
            <person name="Swann R.M."/>
            <person name="Vaudin M."/>
            <person name="Wall M."/>
            <person name="Wallis J.M."/>
            <person name="Whiteley M.N."/>
            <person name="Willey D.L."/>
            <person name="Williams L."/>
            <person name="Williams S.A."/>
            <person name="Williamson H."/>
            <person name="Wilmer T.E."/>
            <person name="Wilming L."/>
            <person name="Wright C.L."/>
            <person name="Hubbard T."/>
            <person name="Bentley D.R."/>
            <person name="Beck S."/>
            <person name="Rogers J."/>
            <person name="Shimizu N."/>
            <person name="Minoshima S."/>
            <person name="Kawasaki K."/>
            <person name="Sasaki T."/>
            <person name="Asakawa S."/>
            <person name="Kudoh J."/>
            <person name="Shintani A."/>
            <person name="Shibuya K."/>
            <person name="Yoshizaki Y."/>
            <person name="Aoki N."/>
            <person name="Mitsuyama S."/>
            <person name="Roe B.A."/>
            <person name="Chen F."/>
            <person name="Chu L."/>
            <person name="Crabtree J."/>
            <person name="Deschamps S."/>
            <person name="Do A."/>
            <person name="Do T."/>
            <person name="Dorman A."/>
            <person name="Fang F."/>
            <person name="Fu Y."/>
            <person name="Hu P."/>
            <person name="Hua A."/>
            <person name="Kenton S."/>
            <person name="Lai H."/>
            <person name="Lao H.I."/>
            <person name="Lewis J."/>
            <person name="Lewis S."/>
            <person name="Lin S.-P."/>
            <person name="Loh P."/>
            <person name="Malaj E."/>
            <person name="Nguyen T."/>
            <person name="Pan H."/>
            <person name="Phan S."/>
            <person name="Qi S."/>
            <person name="Qian Y."/>
            <person name="Ray L."/>
            <person name="Ren Q."/>
            <person name="Shaull S."/>
            <person name="Sloan D."/>
            <person name="Song L."/>
            <person name="Wang Q."/>
            <person name="Wang Y."/>
            <person name="Wang Z."/>
            <person name="White J."/>
            <person name="Willingham D."/>
            <person name="Wu H."/>
            <person name="Yao Z."/>
            <person name="Zhan M."/>
            <person name="Zhang G."/>
            <person name="Chissoe S."/>
            <person name="Murray J."/>
            <person name="Miller N."/>
            <person name="Minx P."/>
            <person name="Fulton R."/>
            <person name="Johnson D."/>
            <person name="Bemis G."/>
            <person name="Bentley D."/>
            <person name="Bradshaw H."/>
            <person name="Bourne S."/>
            <person name="Cordes M."/>
            <person name="Du Z."/>
            <person name="Fulton L."/>
            <person name="Goela D."/>
            <person name="Graves T."/>
            <person name="Hawkins J."/>
            <person name="Hinds K."/>
            <person name="Kemp K."/>
            <person name="Latreille P."/>
            <person name="Layman D."/>
            <person name="Ozersky P."/>
            <person name="Rohlfing T."/>
            <person name="Scheet P."/>
            <person name="Walker C."/>
            <person name="Wamsley A."/>
            <person name="Wohldmann P."/>
            <person name="Pepin K."/>
            <person name="Nelson J."/>
            <person name="Korf I."/>
            <person name="Bedell J.A."/>
            <person name="Hillier L.W."/>
            <person name="Mardis E."/>
            <person name="Waterston R."/>
            <person name="Wilson R."/>
            <person name="Emanuel B.S."/>
            <person name="Shaikh T."/>
            <person name="Kurahashi H."/>
            <person name="Saitta S."/>
            <person name="Budarf M.L."/>
            <person name="McDermid H.E."/>
            <person name="Johnson A."/>
            <person name="Wong A.C.C."/>
            <person name="Morrow B.E."/>
            <person name="Edelmann L."/>
            <person name="Kim U.J."/>
            <person name="Shizuya H."/>
            <person name="Simon M.I."/>
            <person name="Dumanski J.P."/>
            <person name="Peyrard M."/>
            <person name="Kedra D."/>
            <person name="Seroussi E."/>
            <person name="Fransson I."/>
            <person name="Tapia I."/>
            <person name="Bruder C.E."/>
            <person name="O'Brien K.P."/>
            <person name="Wilkinson P."/>
            <person name="Bodenteich A."/>
            <person name="Hartman K."/>
            <person name="Hu X."/>
            <person name="Khan A.S."/>
            <person name="Lane L."/>
            <person name="Tilahun Y."/>
            <person name="Wright H."/>
        </authorList>
    </citation>
    <scope>NUCLEOTIDE SEQUENCE [LARGE SCALE GENOMIC DNA]</scope>
</reference>
<reference key="5">
    <citation type="submission" date="2005-07" db="EMBL/GenBank/DDBJ databases">
        <authorList>
            <person name="Mural R.J."/>
            <person name="Istrail S."/>
            <person name="Sutton G.G."/>
            <person name="Florea L."/>
            <person name="Halpern A.L."/>
            <person name="Mobarry C.M."/>
            <person name="Lippert R."/>
            <person name="Walenz B."/>
            <person name="Shatkay H."/>
            <person name="Dew I."/>
            <person name="Miller J.R."/>
            <person name="Flanigan M.J."/>
            <person name="Edwards N.J."/>
            <person name="Bolanos R."/>
            <person name="Fasulo D."/>
            <person name="Halldorsson B.V."/>
            <person name="Hannenhalli S."/>
            <person name="Turner R."/>
            <person name="Yooseph S."/>
            <person name="Lu F."/>
            <person name="Nusskern D.R."/>
            <person name="Shue B.C."/>
            <person name="Zheng X.H."/>
            <person name="Zhong F."/>
            <person name="Delcher A.L."/>
            <person name="Huson D.H."/>
            <person name="Kravitz S.A."/>
            <person name="Mouchard L."/>
            <person name="Reinert K."/>
            <person name="Remington K.A."/>
            <person name="Clark A.G."/>
            <person name="Waterman M.S."/>
            <person name="Eichler E.E."/>
            <person name="Adams M.D."/>
            <person name="Hunkapiller M.W."/>
            <person name="Myers E.W."/>
            <person name="Venter J.C."/>
        </authorList>
    </citation>
    <scope>NUCLEOTIDE SEQUENCE [LARGE SCALE GENOMIC DNA]</scope>
</reference>
<reference key="6">
    <citation type="journal article" date="2004" name="Genome Res.">
        <title>The status, quality, and expansion of the NIH full-length cDNA project: the Mammalian Gene Collection (MGC).</title>
        <authorList>
            <consortium name="The MGC Project Team"/>
        </authorList>
    </citation>
    <scope>NUCLEOTIDE SEQUENCE [LARGE SCALE MRNA] (ISOFORMS 1 AND 2)</scope>
    <source>
        <tissue>Lymph</tissue>
        <tissue>Skin</tissue>
    </source>
</reference>
<reference key="7">
    <citation type="journal article" date="1999" name="J. Biol. Chem.">
        <title>Cloning and characterization of a novel human phosphatidylinositol transfer protein, rdgBbeta.</title>
        <authorList>
            <person name="Fullwood Y."/>
            <person name="dos Santos M."/>
            <person name="Hsuan J.J."/>
        </authorList>
    </citation>
    <scope>FUNCTION</scope>
    <scope>CATALYTIC ACTIVITY</scope>
</reference>
<reference key="8">
    <citation type="journal article" date="2008" name="Traffic">
        <title>Dynamics of lipid transfer by phosphatidylinositol transfer proteins in cells.</title>
        <authorList>
            <person name="Shadan S."/>
            <person name="Holic R."/>
            <person name="Carvou N."/>
            <person name="Ee P."/>
            <person name="Li M."/>
            <person name="Murray-Rust J."/>
            <person name="Cockcroft S."/>
        </authorList>
    </citation>
    <scope>FUNCTION</scope>
    <scope>CATALYTIC ACTIVITY</scope>
    <scope>ACTIVITY REGULATION</scope>
    <scope>MUTAGENESIS OF CYS-94; CYS-187 AND 202-TRP-TRP-203</scope>
</reference>
<reference key="9">
    <citation type="journal article" date="2009" name="Science">
        <title>Lysine acetylation targets protein complexes and co-regulates major cellular functions.</title>
        <authorList>
            <person name="Choudhary C."/>
            <person name="Kumar C."/>
            <person name="Gnad F."/>
            <person name="Nielsen M.L."/>
            <person name="Rehman M."/>
            <person name="Walther T.C."/>
            <person name="Olsen J.V."/>
            <person name="Mann M."/>
        </authorList>
    </citation>
    <scope>ACETYLATION [LARGE SCALE ANALYSIS] AT LYS-215</scope>
    <scope>IDENTIFICATION BY MASS SPECTROMETRY [LARGE SCALE ANALYSIS]</scope>
</reference>
<reference key="10">
    <citation type="journal article" date="2010" name="J. Cell Sci.">
        <title>Phosphatidylinositol- and phosphatidylcholine-transfer activity of PITPbeta is essential for COPI-mediated retrograde transport from the Golgi to the endoplasmic reticulum.</title>
        <authorList>
            <person name="Carvou N."/>
            <person name="Holic R."/>
            <person name="Li M."/>
            <person name="Futter C."/>
            <person name="Skippen A."/>
            <person name="Cockcroft S."/>
        </authorList>
    </citation>
    <scope>FUNCTION</scope>
    <scope>CATALYTIC ACTIVITY</scope>
    <scope>MUTAGENESIS OF LYS-60; ASN-89; CYS-94 AND 202-TRP-TRP-203</scope>
</reference>
<reference key="11">
    <citation type="journal article" date="2011" name="BMC Syst. Biol.">
        <title>Initial characterization of the human central proteome.</title>
        <authorList>
            <person name="Burkard T.R."/>
            <person name="Planyavsky M."/>
            <person name="Kaupe I."/>
            <person name="Breitwieser F.P."/>
            <person name="Buerckstuemmer T."/>
            <person name="Bennett K.L."/>
            <person name="Superti-Furga G."/>
            <person name="Colinge J."/>
        </authorList>
    </citation>
    <scope>IDENTIFICATION BY MASS SPECTROMETRY [LARGE SCALE ANALYSIS]</scope>
</reference>
<reference key="12">
    <citation type="journal article" date="2012" name="Proc. Natl. Acad. Sci. U.S.A.">
        <title>N-terminal acetylome analyses and functional insights of the N-terminal acetyltransferase NatB.</title>
        <authorList>
            <person name="Van Damme P."/>
            <person name="Lasa M."/>
            <person name="Polevoda B."/>
            <person name="Gazquez C."/>
            <person name="Elosegui-Artola A."/>
            <person name="Kim D.S."/>
            <person name="De Juan-Pardo E."/>
            <person name="Demeyer K."/>
            <person name="Hole K."/>
            <person name="Larrea E."/>
            <person name="Timmerman E."/>
            <person name="Prieto J."/>
            <person name="Arnesen T."/>
            <person name="Sherman F."/>
            <person name="Gevaert K."/>
            <person name="Aldabe R."/>
        </authorList>
    </citation>
    <scope>IDENTIFICATION BY MASS SPECTROMETRY [LARGE SCALE ANALYSIS]</scope>
</reference>
<reference key="13">
    <citation type="journal article" date="2015" name="Proteomics">
        <title>N-terminome analysis of the human mitochondrial proteome.</title>
        <authorList>
            <person name="Vaca Jacome A.S."/>
            <person name="Rabilloud T."/>
            <person name="Schaeffer-Reiss C."/>
            <person name="Rompais M."/>
            <person name="Ayoub D."/>
            <person name="Lane L."/>
            <person name="Bairoch A."/>
            <person name="Van Dorsselaer A."/>
            <person name="Carapito C."/>
        </authorList>
    </citation>
    <scope>IDENTIFICATION BY MASS SPECTROMETRY [LARGE SCALE ANALYSIS]</scope>
</reference>
<evidence type="ECO:0000250" key="1">
    <source>
        <dbReference type="UniProtKB" id="P53811"/>
    </source>
</evidence>
<evidence type="ECO:0000250" key="2">
    <source>
        <dbReference type="UniProtKB" id="P53812"/>
    </source>
</evidence>
<evidence type="ECO:0000250" key="3">
    <source>
        <dbReference type="UniProtKB" id="Q9TR36"/>
    </source>
</evidence>
<evidence type="ECO:0000269" key="4">
    <source>
    </source>
</evidence>
<evidence type="ECO:0000269" key="5">
    <source>
    </source>
</evidence>
<evidence type="ECO:0000269" key="6">
    <source>
    </source>
</evidence>
<evidence type="ECO:0000303" key="7">
    <source>
    </source>
</evidence>
<evidence type="ECO:0000303" key="8">
    <source>
    </source>
</evidence>
<evidence type="ECO:0000305" key="9"/>
<evidence type="ECO:0000305" key="10">
    <source>
    </source>
</evidence>
<evidence type="ECO:0000305" key="11">
    <source>
    </source>
</evidence>
<evidence type="ECO:0007744" key="12">
    <source>
    </source>
</evidence>
<comment type="function">
    <text evidence="3 4 5 6">Catalyzes the transfer of phosphatidylinositol and phosphatidylcholine between membranes (PubMed:10531358, PubMed:18636990, PubMed:20332109). Also catalyzes the transfer of sphingomyelin (By similarity). Required for COPI-mediated retrograde transport from the Golgi to the endoplasmic reticulum; phosphatidylinositol and phosphatidylcholine transfer activity is essential for this function (PubMed:20332109).</text>
</comment>
<comment type="catalytic activity">
    <reaction evidence="5 6">
        <text>a 1,2-diacyl-sn-glycero-3-phosphocholine(in) = a 1,2-diacyl-sn-glycero-3-phosphocholine(out)</text>
        <dbReference type="Rhea" id="RHEA:38571"/>
        <dbReference type="ChEBI" id="CHEBI:57643"/>
    </reaction>
    <physiologicalReaction direction="left-to-right" evidence="11">
        <dbReference type="Rhea" id="RHEA:38572"/>
    </physiologicalReaction>
</comment>
<comment type="catalytic activity">
    <reaction evidence="4 5 6">
        <text>a 1,2-diacyl-sn-glycero-3-phospho-(1D-myo-inositol)(in) = a 1,2-diacyl-sn-glycero-3-phospho-(1D-myo-inositol)(out)</text>
        <dbReference type="Rhea" id="RHEA:38691"/>
        <dbReference type="ChEBI" id="CHEBI:57880"/>
    </reaction>
    <physiologicalReaction direction="left-to-right" evidence="10">
        <dbReference type="Rhea" id="RHEA:38692"/>
    </physiologicalReaction>
</comment>
<comment type="catalytic activity">
    <reaction evidence="3">
        <text>an N-(acyl)-sphingosylphosphocholine(in) = an N-(acyl)-sphingosylphosphocholine(out)</text>
        <dbReference type="Rhea" id="RHEA:43776"/>
        <dbReference type="ChEBI" id="CHEBI:64583"/>
    </reaction>
    <physiologicalReaction direction="left-to-right" evidence="3">
        <dbReference type="Rhea" id="RHEA:43777"/>
    </physiologicalReaction>
</comment>
<comment type="activity regulation">
    <text evidence="5">Phosphatidylinositol transfer activity is inhibited by N-ethylmaleimide.</text>
</comment>
<comment type="interaction">
    <interactant intactId="EBI-1047143">
        <id>P48739</id>
    </interactant>
    <interactant intactId="EBI-718729">
        <id>P55212</id>
        <label>CASP6</label>
    </interactant>
    <organismsDiffer>false</organismsDiffer>
    <experiments>3</experiments>
</comment>
<comment type="interaction">
    <interactant intactId="EBI-1047143">
        <id>P48739</id>
    </interactant>
    <interactant intactId="EBI-21591415">
        <id>P13473-2</id>
        <label>LAMP2</label>
    </interactant>
    <organismsDiffer>false</organismsDiffer>
    <experiments>3</experiments>
</comment>
<comment type="interaction">
    <interactant intactId="EBI-1047143">
        <id>P48739</id>
    </interactant>
    <interactant intactId="EBI-5280197">
        <id>O75400-2</id>
        <label>PRPF40A</label>
    </interactant>
    <organismsDiffer>false</organismsDiffer>
    <experiments>3</experiments>
</comment>
<comment type="interaction">
    <interactant intactId="EBI-1047143">
        <id>P48739</id>
    </interactant>
    <interactant intactId="EBI-2623095">
        <id>Q9Y371</id>
        <label>SH3GLB1</label>
    </interactant>
    <organismsDiffer>false</organismsDiffer>
    <experiments>3</experiments>
</comment>
<comment type="subcellular location">
    <subcellularLocation>
        <location evidence="1">Golgi apparatus</location>
    </subcellularLocation>
    <subcellularLocation>
        <location evidence="2">Golgi apparatus membrane</location>
    </subcellularLocation>
    <subcellularLocation>
        <location evidence="2">Endoplasmic reticulum membrane</location>
    </subcellularLocation>
</comment>
<comment type="alternative products">
    <event type="alternative splicing"/>
    <isoform>
        <id>P48739-1</id>
        <name>1</name>
        <sequence type="displayed"/>
    </isoform>
    <isoform>
        <id>P48739-2</id>
        <name>2</name>
        <sequence type="described" ref="VSP_012762"/>
    </isoform>
    <isoform>
        <id>P48739-3</id>
        <name>3</name>
        <sequence type="described" ref="VSP_055132"/>
    </isoform>
</comment>
<comment type="tissue specificity">
    <text>Widely expressed in various tissues including brain.</text>
</comment>
<comment type="PTM">
    <text evidence="1">Constitutive phosphorylation of Ser-262 has no effect on phospholipid transfer activity but is required for Golgi targeting.</text>
</comment>
<comment type="similarity">
    <text evidence="9">Belongs to the PtdIns transfer protein family. PI transfer class I subfamily.</text>
</comment>
<protein>
    <recommendedName>
        <fullName>Phosphatidylinositol transfer protein beta isoform</fullName>
        <shortName>PI-TP-beta</shortName>
        <shortName>PtdIns transfer protein beta</shortName>
        <shortName>PtdInsTP beta</shortName>
    </recommendedName>
</protein>
<proteinExistence type="evidence at protein level"/>
<sequence length="271" mass="31540">MVLIKEFRVVLPCSVQEYQVGQLYSVAEASKNETGGGEGIEVLKNEPYEKDGEKGQYTHKIYHLKSKVPAFVRMIAPEGSLVFHEKAWNAYPYCRTIVTNEYMKDDFFIKIETWHKPDLGTLENVHGLDPNTWKTVEIVHIDIADRSQVEPADYKADEDPALFQSVKTKRGPLGPNWKKELANSPDCPQMCAYKLVTIKFKWWGLQSKVENFIQKQEKRIFTNFHRQLFCWIDKWIDLTMEDIRRMEDETQKELETMRKRGSVRGTSAADV</sequence>
<keyword id="KW-0007">Acetylation</keyword>
<keyword id="KW-0025">Alternative splicing</keyword>
<keyword id="KW-0256">Endoplasmic reticulum</keyword>
<keyword id="KW-0333">Golgi apparatus</keyword>
<keyword id="KW-0445">Lipid transport</keyword>
<keyword id="KW-0446">Lipid-binding</keyword>
<keyword id="KW-0472">Membrane</keyword>
<keyword id="KW-0597">Phosphoprotein</keyword>
<keyword id="KW-1267">Proteomics identification</keyword>
<keyword id="KW-1185">Reference proteome</keyword>
<keyword id="KW-0813">Transport</keyword>
<accession>P48739</accession>
<accession>B3KYB8</accession>
<accession>B7Z7Q0</accession>
<accession>Q8N5W1</accession>
<feature type="chain" id="PRO_0000191643" description="Phosphatidylinositol transfer protein beta isoform">
    <location>
        <begin position="1"/>
        <end position="271"/>
    </location>
</feature>
<feature type="modified residue" description="N6-acetyllysine" evidence="12">
    <location>
        <position position="215"/>
    </location>
</feature>
<feature type="modified residue" description="Phosphoserine" evidence="1">
    <location>
        <position position="262"/>
    </location>
</feature>
<feature type="splice variant" id="VSP_055132" description="In isoform 3." evidence="7">
    <original>MVLIKEF</original>
    <variation>MGDLLMEKC</variation>
    <location>
        <begin position="1"/>
        <end position="7"/>
    </location>
</feature>
<feature type="splice variant" id="VSP_012762" description="In isoform 2." evidence="8">
    <original>MRKRGSVRGTSAADV</original>
    <variation>LRNQGQVRGTSAASDE</variation>
    <location>
        <begin position="257"/>
        <end position="271"/>
    </location>
</feature>
<feature type="mutagenesis site" description="Loss of phosphatidylinositol transfer activity but no effect on phosphatidylcholine transfer activity. Fails to rescue the retrograde transport defect from the Golgi to endoplasmic reticulum in PITPNB-deficient cells." evidence="6">
    <original>K</original>
    <variation>A</variation>
    <location>
        <position position="60"/>
    </location>
</feature>
<feature type="mutagenesis site" description="Loss of phosphatidylinositol transfer activity but no effect on phosphatidylcholine transfer activity. Fails to rescue the retrograde transport defect from the Golgi to endoplasmic reticulum in PITPNB-deficient cells." evidence="6">
    <original>N</original>
    <variation>F</variation>
    <location>
        <position position="89"/>
    </location>
</feature>
<feature type="mutagenesis site" description="Loss of phosphatidylcholine transfer activity but no effect on phosphatidylinositol transfer activity. Not inhibited by N-ethylmaleimide. Fails to rescue the retrograde transport defect from the Golgi to endoplasmic reticulum in PITPNB-deficient cells." evidence="5 6">
    <original>C</original>
    <variation>T</variation>
    <variation>A</variation>
    <location>
        <position position="94"/>
    </location>
</feature>
<feature type="mutagenesis site" description="No effect on phosphatidylinositol transfer activity." evidence="5">
    <original>C</original>
    <variation>A</variation>
    <location>
        <position position="187"/>
    </location>
</feature>
<feature type="mutagenesis site" description="Loss of phosphatidylinositol transfer activity. Fails to rescue the retrograde transport defect from the Golgi to endoplasmic reticulum in PITPNB-deficient cells." evidence="5 6">
    <original>WW</original>
    <variation>AA</variation>
    <location>
        <begin position="202"/>
        <end position="203"/>
    </location>
</feature>
<name>PIPNB_HUMAN</name>
<gene>
    <name type="primary">PITPNB</name>
</gene>
<dbReference type="EMBL" id="D30037">
    <property type="protein sequence ID" value="BAA06277.1"/>
    <property type="molecule type" value="mRNA"/>
</dbReference>
<dbReference type="EMBL" id="CR456541">
    <property type="protein sequence ID" value="CAG30427.1"/>
    <property type="molecule type" value="mRNA"/>
</dbReference>
<dbReference type="EMBL" id="AK302367">
    <property type="protein sequence ID" value="BAH13686.1"/>
    <property type="molecule type" value="mRNA"/>
</dbReference>
<dbReference type="EMBL" id="AL031591">
    <property type="status" value="NOT_ANNOTATED_CDS"/>
    <property type="molecule type" value="Genomic_DNA"/>
</dbReference>
<dbReference type="EMBL" id="CH471095">
    <property type="protein sequence ID" value="EAW59743.1"/>
    <property type="molecule type" value="Genomic_DNA"/>
</dbReference>
<dbReference type="EMBL" id="BC018704">
    <property type="protein sequence ID" value="AAH18704.1"/>
    <property type="molecule type" value="mRNA"/>
</dbReference>
<dbReference type="EMBL" id="BC031427">
    <property type="protein sequence ID" value="AAH31427.1"/>
    <property type="molecule type" value="mRNA"/>
</dbReference>
<dbReference type="CCDS" id="CCDS13842.1">
    <molecule id="P48739-1"/>
</dbReference>
<dbReference type="CCDS" id="CCDS63432.1">
    <molecule id="P48739-3"/>
</dbReference>
<dbReference type="CCDS" id="CCDS63433.1">
    <molecule id="P48739-2"/>
</dbReference>
<dbReference type="RefSeq" id="NP_001271206.1">
    <molecule id="P48739-2"/>
    <property type="nucleotide sequence ID" value="NM_001284277.2"/>
</dbReference>
<dbReference type="RefSeq" id="NP_001271207.1">
    <molecule id="P48739-3"/>
    <property type="nucleotide sequence ID" value="NM_001284278.2"/>
</dbReference>
<dbReference type="RefSeq" id="NP_036531.1">
    <molecule id="P48739-1"/>
    <property type="nucleotide sequence ID" value="NM_012399.5"/>
</dbReference>
<dbReference type="SMR" id="P48739"/>
<dbReference type="BioGRID" id="117261">
    <property type="interactions" value="55"/>
</dbReference>
<dbReference type="FunCoup" id="P48739">
    <property type="interactions" value="3145"/>
</dbReference>
<dbReference type="IntAct" id="P48739">
    <property type="interactions" value="17"/>
</dbReference>
<dbReference type="MINT" id="P48739"/>
<dbReference type="STRING" id="9606.ENSP00000487693"/>
<dbReference type="SwissLipids" id="SLP:000000416"/>
<dbReference type="GlyGen" id="P48739">
    <property type="glycosylation" value="1 site, 1 O-linked glycan (1 site)"/>
</dbReference>
<dbReference type="iPTMnet" id="P48739"/>
<dbReference type="MetOSite" id="P48739"/>
<dbReference type="PhosphoSitePlus" id="P48739"/>
<dbReference type="SwissPalm" id="P48739"/>
<dbReference type="BioMuta" id="PITPNB"/>
<dbReference type="DMDM" id="1346772"/>
<dbReference type="jPOST" id="P48739"/>
<dbReference type="MassIVE" id="P48739"/>
<dbReference type="PaxDb" id="9606-ENSP00000321266"/>
<dbReference type="PeptideAtlas" id="P48739"/>
<dbReference type="ProteomicsDB" id="55934">
    <molecule id="P48739-1"/>
</dbReference>
<dbReference type="ProteomicsDB" id="55935">
    <molecule id="P48739-2"/>
</dbReference>
<dbReference type="ProteomicsDB" id="6893"/>
<dbReference type="Pumba" id="P48739"/>
<dbReference type="Antibodypedia" id="24304">
    <property type="antibodies" value="299 antibodies from 29 providers"/>
</dbReference>
<dbReference type="DNASU" id="23760"/>
<dbReference type="Ensembl" id="ENST00000320996.14">
    <molecule id="P48739-2"/>
    <property type="protein sequence ID" value="ENSP00000321266.10"/>
    <property type="gene ID" value="ENSG00000180957.19"/>
</dbReference>
<dbReference type="Ensembl" id="ENST00000335272.10">
    <molecule id="P48739-1"/>
    <property type="protein sequence ID" value="ENSP00000334738.5"/>
    <property type="gene ID" value="ENSG00000180957.19"/>
</dbReference>
<dbReference type="Ensembl" id="ENST00000634017.1">
    <molecule id="P48739-3"/>
    <property type="protein sequence ID" value="ENSP00000487693.1"/>
    <property type="gene ID" value="ENSG00000180957.19"/>
</dbReference>
<dbReference type="GeneID" id="23760"/>
<dbReference type="KEGG" id="hsa:23760"/>
<dbReference type="MANE-Select" id="ENST00000335272.10">
    <property type="protein sequence ID" value="ENSP00000334738.5"/>
    <property type="RefSeq nucleotide sequence ID" value="NM_012399.5"/>
    <property type="RefSeq protein sequence ID" value="NP_036531.1"/>
</dbReference>
<dbReference type="UCSC" id="uc003adk.5">
    <molecule id="P48739-1"/>
    <property type="organism name" value="human"/>
</dbReference>
<dbReference type="AGR" id="HGNC:9002"/>
<dbReference type="CTD" id="23760"/>
<dbReference type="DisGeNET" id="23760"/>
<dbReference type="GeneCards" id="PITPNB"/>
<dbReference type="HGNC" id="HGNC:9002">
    <property type="gene designation" value="PITPNB"/>
</dbReference>
<dbReference type="HPA" id="ENSG00000180957">
    <property type="expression patterns" value="Low tissue specificity"/>
</dbReference>
<dbReference type="MIM" id="606876">
    <property type="type" value="gene"/>
</dbReference>
<dbReference type="neXtProt" id="NX_P48739"/>
<dbReference type="OpenTargets" id="ENSG00000180957"/>
<dbReference type="PharmGKB" id="PA33336"/>
<dbReference type="VEuPathDB" id="HostDB:ENSG00000180957"/>
<dbReference type="eggNOG" id="KOG3668">
    <property type="taxonomic scope" value="Eukaryota"/>
</dbReference>
<dbReference type="GeneTree" id="ENSGT00940000155101"/>
<dbReference type="HOGENOM" id="CLU_046509_0_0_1"/>
<dbReference type="InParanoid" id="P48739"/>
<dbReference type="OMA" id="NELKPDC"/>
<dbReference type="OrthoDB" id="18453at2759"/>
<dbReference type="PAN-GO" id="P48739">
    <property type="GO annotations" value="5 GO annotations based on evolutionary models"/>
</dbReference>
<dbReference type="PhylomeDB" id="P48739"/>
<dbReference type="TreeFam" id="TF313279"/>
<dbReference type="PathwayCommons" id="P48739"/>
<dbReference type="Reactome" id="R-HSA-1483196">
    <property type="pathway name" value="PI and PC transport between ER and Golgi membranes"/>
</dbReference>
<dbReference type="SignaLink" id="P48739"/>
<dbReference type="BioGRID-ORCS" id="23760">
    <property type="hits" value="44 hits in 1160 CRISPR screens"/>
</dbReference>
<dbReference type="ChiTaRS" id="PITPNB">
    <property type="organism name" value="human"/>
</dbReference>
<dbReference type="GeneWiki" id="PITPNB"/>
<dbReference type="GenomeRNAi" id="23760"/>
<dbReference type="Pharos" id="P48739">
    <property type="development level" value="Tbio"/>
</dbReference>
<dbReference type="PRO" id="PR:P48739"/>
<dbReference type="Proteomes" id="UP000005640">
    <property type="component" value="Chromosome 22"/>
</dbReference>
<dbReference type="RNAct" id="P48739">
    <property type="molecule type" value="protein"/>
</dbReference>
<dbReference type="Bgee" id="ENSG00000180957">
    <property type="expression patterns" value="Expressed in gingival epithelium and 218 other cell types or tissues"/>
</dbReference>
<dbReference type="ExpressionAtlas" id="P48739">
    <property type="expression patterns" value="baseline and differential"/>
</dbReference>
<dbReference type="GO" id="GO:0005737">
    <property type="term" value="C:cytoplasm"/>
    <property type="evidence" value="ECO:0000318"/>
    <property type="project" value="GO_Central"/>
</dbReference>
<dbReference type="GO" id="GO:0005789">
    <property type="term" value="C:endoplasmic reticulum membrane"/>
    <property type="evidence" value="ECO:0000250"/>
    <property type="project" value="UniProtKB"/>
</dbReference>
<dbReference type="GO" id="GO:0005794">
    <property type="term" value="C:Golgi apparatus"/>
    <property type="evidence" value="ECO:0000250"/>
    <property type="project" value="UniProtKB"/>
</dbReference>
<dbReference type="GO" id="GO:0000139">
    <property type="term" value="C:Golgi membrane"/>
    <property type="evidence" value="ECO:0000250"/>
    <property type="project" value="UniProtKB"/>
</dbReference>
<dbReference type="GO" id="GO:0031210">
    <property type="term" value="F:phosphatidylcholine binding"/>
    <property type="evidence" value="ECO:0000314"/>
    <property type="project" value="BHF-UCL"/>
</dbReference>
<dbReference type="GO" id="GO:0120019">
    <property type="term" value="F:phosphatidylcholine transfer activity"/>
    <property type="evidence" value="ECO:0000315"/>
    <property type="project" value="UniProtKB"/>
</dbReference>
<dbReference type="GO" id="GO:0008525">
    <property type="term" value="F:phosphatidylcholine transporter activity"/>
    <property type="evidence" value="ECO:0000314"/>
    <property type="project" value="BHF-UCL"/>
</dbReference>
<dbReference type="GO" id="GO:0035091">
    <property type="term" value="F:phosphatidylinositol binding"/>
    <property type="evidence" value="ECO:0000314"/>
    <property type="project" value="BHF-UCL"/>
</dbReference>
<dbReference type="GO" id="GO:0008526">
    <property type="term" value="F:phosphatidylinositol transfer activity"/>
    <property type="evidence" value="ECO:0000314"/>
    <property type="project" value="UniProtKB"/>
</dbReference>
<dbReference type="GO" id="GO:0140338">
    <property type="term" value="F:sphingomyelin transfer activity"/>
    <property type="evidence" value="ECO:0000250"/>
    <property type="project" value="UniProtKB"/>
</dbReference>
<dbReference type="GO" id="GO:0006629">
    <property type="term" value="P:lipid metabolic process"/>
    <property type="evidence" value="ECO:0000303"/>
    <property type="project" value="ProtInc"/>
</dbReference>
<dbReference type="GO" id="GO:0006997">
    <property type="term" value="P:nucleus organization"/>
    <property type="evidence" value="ECO:0000304"/>
    <property type="project" value="BHF-UCL"/>
</dbReference>
<dbReference type="GO" id="GO:0015914">
    <property type="term" value="P:phospholipid transport"/>
    <property type="evidence" value="ECO:0000314"/>
    <property type="project" value="BHF-UCL"/>
</dbReference>
<dbReference type="GO" id="GO:0006890">
    <property type="term" value="P:retrograde vesicle-mediated transport, Golgi to endoplasmic reticulum"/>
    <property type="evidence" value="ECO:0000315"/>
    <property type="project" value="UniProtKB"/>
</dbReference>
<dbReference type="CDD" id="cd08888">
    <property type="entry name" value="SRPBCC_PITPNA-B_like"/>
    <property type="match status" value="1"/>
</dbReference>
<dbReference type="FunFam" id="3.30.530.20:FF:000004">
    <property type="entry name" value="Phosphatidylinositol transfer protein alpha isoform"/>
    <property type="match status" value="1"/>
</dbReference>
<dbReference type="Gene3D" id="3.30.530.20">
    <property type="match status" value="1"/>
</dbReference>
<dbReference type="InterPro" id="IPR001666">
    <property type="entry name" value="PI_transfer"/>
</dbReference>
<dbReference type="InterPro" id="IPR055261">
    <property type="entry name" value="PI_transfer_N"/>
</dbReference>
<dbReference type="InterPro" id="IPR023393">
    <property type="entry name" value="START-like_dom_sf"/>
</dbReference>
<dbReference type="PANTHER" id="PTHR10658">
    <property type="entry name" value="PHOSPHATIDYLINOSITOL TRANSFER PROTEIN"/>
    <property type="match status" value="1"/>
</dbReference>
<dbReference type="PANTHER" id="PTHR10658:SF27">
    <property type="entry name" value="PHOSPHATIDYLINOSITOL TRANSFER PROTEIN BETA ISOFORM"/>
    <property type="match status" value="1"/>
</dbReference>
<dbReference type="Pfam" id="PF02121">
    <property type="entry name" value="IP_trans"/>
    <property type="match status" value="1"/>
</dbReference>
<dbReference type="PRINTS" id="PR00391">
    <property type="entry name" value="PITRANSFER"/>
</dbReference>
<dbReference type="SUPFAM" id="SSF55961">
    <property type="entry name" value="Bet v1-like"/>
    <property type="match status" value="1"/>
</dbReference>
<organism>
    <name type="scientific">Homo sapiens</name>
    <name type="common">Human</name>
    <dbReference type="NCBI Taxonomy" id="9606"/>
    <lineage>
        <taxon>Eukaryota</taxon>
        <taxon>Metazoa</taxon>
        <taxon>Chordata</taxon>
        <taxon>Craniata</taxon>
        <taxon>Vertebrata</taxon>
        <taxon>Euteleostomi</taxon>
        <taxon>Mammalia</taxon>
        <taxon>Eutheria</taxon>
        <taxon>Euarchontoglires</taxon>
        <taxon>Primates</taxon>
        <taxon>Haplorrhini</taxon>
        <taxon>Catarrhini</taxon>
        <taxon>Hominidae</taxon>
        <taxon>Homo</taxon>
    </lineage>
</organism>